<reference key="1">
    <citation type="journal article" date="2007" name="Toxicon">
        <title>From the identification of gene organization of alpha conotoxins to the cloning of novel toxins.</title>
        <authorList>
            <person name="Yuan D.-D."/>
            <person name="Han Y.-H."/>
            <person name="Wang C.-G."/>
            <person name="Chi C.-W."/>
        </authorList>
    </citation>
    <scope>NUCLEOTIDE SEQUENCE [MRNA]</scope>
    <source>
        <tissue>Venom duct</tissue>
    </source>
</reference>
<organism>
    <name type="scientific">Conus leopardus</name>
    <name type="common">Leopard cone</name>
    <dbReference type="NCBI Taxonomy" id="101306"/>
    <lineage>
        <taxon>Eukaryota</taxon>
        <taxon>Metazoa</taxon>
        <taxon>Spiralia</taxon>
        <taxon>Lophotrochozoa</taxon>
        <taxon>Mollusca</taxon>
        <taxon>Gastropoda</taxon>
        <taxon>Caenogastropoda</taxon>
        <taxon>Neogastropoda</taxon>
        <taxon>Conoidea</taxon>
        <taxon>Conidae</taxon>
        <taxon>Conus</taxon>
        <taxon>Lithoconus</taxon>
    </lineage>
</organism>
<proteinExistence type="inferred from homology"/>
<dbReference type="EMBL" id="DQ311062">
    <property type="protein sequence ID" value="ABD33854.1"/>
    <property type="molecule type" value="mRNA"/>
</dbReference>
<dbReference type="SMR" id="A1X8C2"/>
<dbReference type="ConoServer" id="552">
    <property type="toxin name" value="Lp1.8 precursor"/>
</dbReference>
<dbReference type="GO" id="GO:0005576">
    <property type="term" value="C:extracellular region"/>
    <property type="evidence" value="ECO:0007669"/>
    <property type="project" value="UniProtKB-SubCell"/>
</dbReference>
<dbReference type="GO" id="GO:0035792">
    <property type="term" value="C:host cell postsynaptic membrane"/>
    <property type="evidence" value="ECO:0007669"/>
    <property type="project" value="UniProtKB-KW"/>
</dbReference>
<dbReference type="GO" id="GO:0030550">
    <property type="term" value="F:acetylcholine receptor inhibitor activity"/>
    <property type="evidence" value="ECO:0007669"/>
    <property type="project" value="UniProtKB-KW"/>
</dbReference>
<dbReference type="GO" id="GO:0099106">
    <property type="term" value="F:ion channel regulator activity"/>
    <property type="evidence" value="ECO:0007669"/>
    <property type="project" value="UniProtKB-KW"/>
</dbReference>
<dbReference type="GO" id="GO:0090729">
    <property type="term" value="F:toxin activity"/>
    <property type="evidence" value="ECO:0007669"/>
    <property type="project" value="UniProtKB-KW"/>
</dbReference>
<dbReference type="InterPro" id="IPR009958">
    <property type="entry name" value="Conotoxin_a-typ"/>
</dbReference>
<dbReference type="Pfam" id="PF07365">
    <property type="entry name" value="Toxin_8"/>
    <property type="match status" value="1"/>
</dbReference>
<protein>
    <recommendedName>
        <fullName evidence="4">Alpha-conotoxin-like Lp1.8</fullName>
    </recommendedName>
    <alternativeName>
        <fullName evidence="7">Alpha-conotoxin-like Lp1.7</fullName>
    </alternativeName>
</protein>
<comment type="function">
    <text evidence="2">Alpha-conotoxins act on postsynaptic membranes, they bind to the nicotinic acetylcholine receptors (nAChR) and thus inhibit them (By similarity). Has possibly a distinct nAChR binding mode from other alpha-conotoxins, due to a different three residue motif (Lys-Xaa-Pro instead of the conserved Ser-Xaa-Pro motif) (By similarity).</text>
</comment>
<comment type="subcellular location">
    <subcellularLocation>
        <location evidence="6">Secreted</location>
    </subcellularLocation>
</comment>
<comment type="tissue specificity">
    <text evidence="6">Expressed by the venom duct.</text>
</comment>
<comment type="domain">
    <text evidence="5">The cysteine framework is I (CC-C-C). Alpha4/7 pattern.</text>
</comment>
<comment type="similarity">
    <text evidence="5">Belongs to the conotoxin A superfamily.</text>
</comment>
<comment type="caution">
    <text evidence="6">There is a discrepancy in nomenclature: was submitted as Lp1.7 but is named Lp1.8 in PubMed:17400270.</text>
</comment>
<feature type="signal peptide" evidence="3">
    <location>
        <begin position="1"/>
        <end position="21"/>
    </location>
</feature>
<feature type="propeptide" id="PRO_0000370653" evidence="6">
    <location>
        <begin position="22"/>
        <end position="41"/>
    </location>
</feature>
<feature type="peptide" id="PRO_0000370654" description="Alpha-conotoxin-like Lp1.8" evidence="6">
    <location>
        <begin position="42"/>
        <end position="64"/>
    </location>
</feature>
<feature type="region of interest" description="Lacks the Ser-Xaa-Pro motif that is crucial for potent interaction with nAChR" evidence="5">
    <location>
        <begin position="49"/>
        <end position="51"/>
    </location>
</feature>
<feature type="disulfide bond" evidence="1">
    <location>
        <begin position="47"/>
        <end position="53"/>
    </location>
</feature>
<feature type="disulfide bond" evidence="1">
    <location>
        <begin position="48"/>
        <end position="61"/>
    </location>
</feature>
<sequence length="64" mass="7577">MGMRMMFTMFLLVVLTTTVVSFNSDRESNHENRRTSNQITRGVWDECCKDPQCRQNHMQHCPAR</sequence>
<accession>A1X8C2</accession>
<name>CA18_CONLE</name>
<evidence type="ECO:0000250" key="1">
    <source>
        <dbReference type="UniProtKB" id="P56636"/>
    </source>
</evidence>
<evidence type="ECO:0000250" key="2">
    <source>
        <dbReference type="UniProtKB" id="Q2I2R8"/>
    </source>
</evidence>
<evidence type="ECO:0000255" key="3"/>
<evidence type="ECO:0000303" key="4">
    <source>
    </source>
</evidence>
<evidence type="ECO:0000305" key="5"/>
<evidence type="ECO:0000305" key="6">
    <source>
    </source>
</evidence>
<evidence type="ECO:0000312" key="7">
    <source>
        <dbReference type="EMBL" id="ABD33854.1"/>
    </source>
</evidence>
<keyword id="KW-0008">Acetylcholine receptor inhibiting toxin</keyword>
<keyword id="KW-1015">Disulfide bond</keyword>
<keyword id="KW-0872">Ion channel impairing toxin</keyword>
<keyword id="KW-0528">Neurotoxin</keyword>
<keyword id="KW-0629">Postsynaptic neurotoxin</keyword>
<keyword id="KW-0964">Secreted</keyword>
<keyword id="KW-0732">Signal</keyword>
<keyword id="KW-0800">Toxin</keyword>